<keyword id="KW-0067">ATP-binding</keyword>
<keyword id="KW-0173">Coenzyme A biosynthesis</keyword>
<keyword id="KW-0963">Cytoplasm</keyword>
<keyword id="KW-0418">Kinase</keyword>
<keyword id="KW-0547">Nucleotide-binding</keyword>
<keyword id="KW-1185">Reference proteome</keyword>
<keyword id="KW-0808">Transferase</keyword>
<accession>A8AKV0</accession>
<reference key="1">
    <citation type="submission" date="2007-08" db="EMBL/GenBank/DDBJ databases">
        <authorList>
            <consortium name="The Citrobacter koseri Genome Sequencing Project"/>
            <person name="McClelland M."/>
            <person name="Sanderson E.K."/>
            <person name="Porwollik S."/>
            <person name="Spieth J."/>
            <person name="Clifton W.S."/>
            <person name="Latreille P."/>
            <person name="Courtney L."/>
            <person name="Wang C."/>
            <person name="Pepin K."/>
            <person name="Bhonagiri V."/>
            <person name="Nash W."/>
            <person name="Johnson M."/>
            <person name="Thiruvilangam P."/>
            <person name="Wilson R."/>
        </authorList>
    </citation>
    <scope>NUCLEOTIDE SEQUENCE [LARGE SCALE GENOMIC DNA]</scope>
    <source>
        <strain>ATCC BAA-895 / CDC 4225-83 / SGSC4696</strain>
    </source>
</reference>
<dbReference type="EC" id="2.7.1.33" evidence="1"/>
<dbReference type="EMBL" id="CP000822">
    <property type="protein sequence ID" value="ABV14113.1"/>
    <property type="status" value="ALT_INIT"/>
    <property type="molecule type" value="Genomic_DNA"/>
</dbReference>
<dbReference type="SMR" id="A8AKV0"/>
<dbReference type="STRING" id="290338.CKO_03017"/>
<dbReference type="KEGG" id="cko:CKO_03017"/>
<dbReference type="HOGENOM" id="CLU_053818_1_1_6"/>
<dbReference type="UniPathway" id="UPA00241">
    <property type="reaction ID" value="UER00352"/>
</dbReference>
<dbReference type="Proteomes" id="UP000008148">
    <property type="component" value="Chromosome"/>
</dbReference>
<dbReference type="GO" id="GO:0005737">
    <property type="term" value="C:cytoplasm"/>
    <property type="evidence" value="ECO:0007669"/>
    <property type="project" value="UniProtKB-SubCell"/>
</dbReference>
<dbReference type="GO" id="GO:0005524">
    <property type="term" value="F:ATP binding"/>
    <property type="evidence" value="ECO:0007669"/>
    <property type="project" value="UniProtKB-UniRule"/>
</dbReference>
<dbReference type="GO" id="GO:0004594">
    <property type="term" value="F:pantothenate kinase activity"/>
    <property type="evidence" value="ECO:0007669"/>
    <property type="project" value="UniProtKB-UniRule"/>
</dbReference>
<dbReference type="GO" id="GO:0015937">
    <property type="term" value="P:coenzyme A biosynthetic process"/>
    <property type="evidence" value="ECO:0007669"/>
    <property type="project" value="UniProtKB-UniRule"/>
</dbReference>
<dbReference type="CDD" id="cd02025">
    <property type="entry name" value="PanK"/>
    <property type="match status" value="1"/>
</dbReference>
<dbReference type="FunFam" id="3.40.50.300:FF:000242">
    <property type="entry name" value="Pantothenate kinase"/>
    <property type="match status" value="1"/>
</dbReference>
<dbReference type="Gene3D" id="3.40.50.300">
    <property type="entry name" value="P-loop containing nucleotide triphosphate hydrolases"/>
    <property type="match status" value="1"/>
</dbReference>
<dbReference type="HAMAP" id="MF_00215">
    <property type="entry name" value="Pantothen_kinase_1"/>
    <property type="match status" value="1"/>
</dbReference>
<dbReference type="InterPro" id="IPR027417">
    <property type="entry name" value="P-loop_NTPase"/>
</dbReference>
<dbReference type="InterPro" id="IPR004566">
    <property type="entry name" value="PanK"/>
</dbReference>
<dbReference type="InterPro" id="IPR006083">
    <property type="entry name" value="PRK/URK"/>
</dbReference>
<dbReference type="NCBIfam" id="TIGR00554">
    <property type="entry name" value="panK_bact"/>
    <property type="match status" value="1"/>
</dbReference>
<dbReference type="PANTHER" id="PTHR10285">
    <property type="entry name" value="URIDINE KINASE"/>
    <property type="match status" value="1"/>
</dbReference>
<dbReference type="Pfam" id="PF00485">
    <property type="entry name" value="PRK"/>
    <property type="match status" value="1"/>
</dbReference>
<dbReference type="PIRSF" id="PIRSF000545">
    <property type="entry name" value="Pantothenate_kin"/>
    <property type="match status" value="1"/>
</dbReference>
<dbReference type="SUPFAM" id="SSF52540">
    <property type="entry name" value="P-loop containing nucleoside triphosphate hydrolases"/>
    <property type="match status" value="1"/>
</dbReference>
<protein>
    <recommendedName>
        <fullName evidence="1">Pantothenate kinase</fullName>
        <ecNumber evidence="1">2.7.1.33</ecNumber>
    </recommendedName>
    <alternativeName>
        <fullName evidence="1">Pantothenic acid kinase</fullName>
    </alternativeName>
</protein>
<gene>
    <name evidence="1" type="primary">coaA</name>
    <name type="ordered locus">CKO_03017</name>
</gene>
<proteinExistence type="inferred from homology"/>
<evidence type="ECO:0000255" key="1">
    <source>
        <dbReference type="HAMAP-Rule" id="MF_00215"/>
    </source>
</evidence>
<evidence type="ECO:0000305" key="2"/>
<organism>
    <name type="scientific">Citrobacter koseri (strain ATCC BAA-895 / CDC 4225-83 / SGSC4696)</name>
    <dbReference type="NCBI Taxonomy" id="290338"/>
    <lineage>
        <taxon>Bacteria</taxon>
        <taxon>Pseudomonadati</taxon>
        <taxon>Pseudomonadota</taxon>
        <taxon>Gammaproteobacteria</taxon>
        <taxon>Enterobacterales</taxon>
        <taxon>Enterobacteriaceae</taxon>
        <taxon>Citrobacter</taxon>
    </lineage>
</organism>
<name>COAA_CITK8</name>
<comment type="catalytic activity">
    <reaction evidence="1">
        <text>(R)-pantothenate + ATP = (R)-4'-phosphopantothenate + ADP + H(+)</text>
        <dbReference type="Rhea" id="RHEA:16373"/>
        <dbReference type="ChEBI" id="CHEBI:10986"/>
        <dbReference type="ChEBI" id="CHEBI:15378"/>
        <dbReference type="ChEBI" id="CHEBI:29032"/>
        <dbReference type="ChEBI" id="CHEBI:30616"/>
        <dbReference type="ChEBI" id="CHEBI:456216"/>
        <dbReference type="EC" id="2.7.1.33"/>
    </reaction>
</comment>
<comment type="pathway">
    <text evidence="1">Cofactor biosynthesis; coenzyme A biosynthesis; CoA from (R)-pantothenate: step 1/5.</text>
</comment>
<comment type="subcellular location">
    <subcellularLocation>
        <location evidence="1">Cytoplasm</location>
    </subcellularLocation>
</comment>
<comment type="similarity">
    <text evidence="1">Belongs to the prokaryotic pantothenate kinase family.</text>
</comment>
<comment type="sequence caution" evidence="2">
    <conflict type="erroneous initiation">
        <sequence resource="EMBL-CDS" id="ABV14113"/>
    </conflict>
</comment>
<feature type="chain" id="PRO_0000325546" description="Pantothenate kinase">
    <location>
        <begin position="1"/>
        <end position="315"/>
    </location>
</feature>
<feature type="binding site" evidence="1">
    <location>
        <begin position="94"/>
        <end position="101"/>
    </location>
    <ligand>
        <name>ATP</name>
        <dbReference type="ChEBI" id="CHEBI:30616"/>
    </ligand>
</feature>
<sequence>MSKEQTLMTPYLQFDRNQWAALRDSVPMTLTEGEIARLKGINEDLSLEEVAEIYLPLSRLLNFYISSNLRRQAVLEQFLGTNGQRIPYIISIAGSVAVGKSTTARVLQALLSRWPEHRRVELITTDGFLHPNQVLKDRGLMKKKGFPESYDMHRLVKFVSDLKSGVPNVTAPVYSHLIYDVIPDGDKTVAQPDILILEGLNVLQSGMDYPHDPHHVFVSDFVDFSIYVDAPEDLLQTWYINRFLKFREGAFTDPDSYFHNYAKLSKDEAINTAASLWKEINWLNLKQNILPTRERASLIMTKSANHAVEQVRLRK</sequence>